<keyword id="KW-0002">3D-structure</keyword>
<keyword id="KW-0007">Acetylation</keyword>
<keyword id="KW-0025">Alternative splicing</keyword>
<keyword id="KW-0903">Direct protein sequencing</keyword>
<keyword id="KW-0238">DNA-binding</keyword>
<keyword id="KW-0240">DNA-directed RNA polymerase</keyword>
<keyword id="KW-0539">Nucleus</keyword>
<keyword id="KW-1267">Proteomics identification</keyword>
<keyword id="KW-1185">Reference proteome</keyword>
<keyword id="KW-0804">Transcription</keyword>
<name>RPAB3_HUMAN</name>
<comment type="function">
    <text evidence="2 3 4 5 10 12 13 14">DNA-dependent RNA polymerase catalyzes the transcription of DNA into RNA using the four ribonucleoside triphosphates as substrates. Common component of RNA polymerases I, II and III which synthesize ribosomal RNA precursors, mRNA precursors and many functional non-coding RNAs, and small RNAs, such as 5S rRNA and tRNAs, respectively.</text>
</comment>
<comment type="subunit">
    <text evidence="1 2 4 5 6 7 8 9 10 11 12 13 14">Component of the RNA polymerase I (Pol I), RNA polymerase II (Pol II) and RNA polymerase III (Pol III) complexes consisting of at least 13, 12 and 17 subunits, respectively (PubMed:16632472, PubMed:16809778, PubMed:27193682, PubMed:30190596, PubMed:33558764, PubMed:9852112). Pol I complex consists of a ten-subunit catalytic core composed of POLR1A/RPA1, POLR1B/RPA2, POLR1C/RPAC1, POLR1D/RPAC2, POLR1H/RPA12, POLR2E/RPABC1, POLR2F/RPABC2, POLR2H/RPABC3, POLR2K/RPABC4 and POLR2L/RPABC5; a mobile stalk subunit POLR1F/RPA43 protruding from the core and additional subunits homologous to general transcription factors POLR1E/RPA49 and POLR1G/RPA34. Part of Pol I pre-initiation complex (PIC), in which Pol I core assembles with RRN3 and promoter-bound UTBF and SL1/TIF-IB complex (PubMed:34671025, PubMed:34887565, PubMed:36271492). Pol II complex contains a ten-subunit catalytic core composed of POLR2A/RPB1, POLR2B/RPB2, POLR2C/RPB3, POLR2I/RPB9, POLR2J/RPB11, POLR2E/RPABC1, POLR2F/RPABC2, POLR2H/RPABC3, POLR2K/RPABC4 and POLR2L/RPABC5 and a mobile stalk composed of two subunits POLR2D/RPB4 and POLR2G/RPB7. Part of Pol II(G) complex, in which Pol II core associates with an additional subunit POLR2M; unlike conventional Pol II, Pol II(G) functions as a transcriptional repressor. Part of TBP-based Pol II pre-initiation complex (PIC), in which Pol II core assembles with general transcription factors and other specific initiation factors including GTF2E1, GTF2E2, GTF2F1, GTF2F2, TCEA1, ERCC2, ERCC3, GTF2H2, GTF2H3, GTF2H4, GTF2H5, GTF2A1, GTF2A2, GTF2B and TBP; this large multi-subunit PIC complex mediates DNA unwinding and targets Pol II core to the transcription start site where the first phosphodiester bond forms. Directly interacts with POLR2A (PubMed:16632472, PubMed:27193682, PubMed:30190596, PubMed:9852112). Pol III complex consists of a ten-subunit catalytic core composed of POLR3A/RPC1, POLR3B/RPC2, POLR1C/RPAC1, POLR1D/RPAC2, POLR3K/RPC10, POLR2E/RPABC1, POLR2F/RPABC2, POLR2H/RPABC3, POLR2K/RPABC4 and POLR2L/RPABC5; a mobile stalk composed of two subunits POLR3H/RPC8 and CRCP/RPC9, protruding from the core and functioning primarily in transcription initiation; and additional subunits homologous to general transcription factors of the RNA polymerase II machinery, POLR3C/RPC3-POLR3F/RPC6-POLR3G/RPC7 heterotrimer required for transcription initiation and POLR3D/RPC4-POLR3E/RPC5 heterodimer involved in both transcription initiation and termination (PubMed:33335104, PubMed:33558764, PubMed:33558766, PubMed:33674783, PubMed:34675218).</text>
</comment>
<comment type="subcellular location">
    <subcellularLocation>
        <location evidence="6 14 15">Nucleus</location>
    </subcellularLocation>
    <subcellularLocation>
        <location evidence="17 18">Nucleus</location>
        <location evidence="17 18">Nucleolus</location>
    </subcellularLocation>
</comment>
<comment type="alternative products">
    <event type="alternative splicing"/>
    <isoform>
        <id>P52434-1</id>
        <name>1</name>
        <sequence type="displayed"/>
    </isoform>
    <isoform>
        <id>P52434-2</id>
        <name>2</name>
        <sequence type="described" ref="VSP_055018"/>
    </isoform>
    <isoform>
        <id>P52434-3</id>
        <name>3</name>
        <sequence type="described" ref="VSP_055017"/>
    </isoform>
    <isoform>
        <id>P52434-4</id>
        <name>4</name>
        <sequence type="described" ref="VSP_055019"/>
    </isoform>
    <isoform>
        <id>P52434-5</id>
        <name>5</name>
        <sequence type="described" ref="VSP_055017 VSP_055018"/>
    </isoform>
</comment>
<comment type="similarity">
    <text evidence="16">Belongs to the eukaryotic RPB8 RNA polymerase subunit family.</text>
</comment>
<gene>
    <name evidence="19" type="primary">POLR2H</name>
</gene>
<reference key="1">
    <citation type="journal article" date="1995" name="Mol. Cell. Biol.">
        <title>Six human RNA polymerase subunits functionally substitute for their yeast counterparts.</title>
        <authorList>
            <person name="McKune K."/>
            <person name="Moore P.A."/>
            <person name="Hull M.W."/>
            <person name="Woychik N.A."/>
        </authorList>
    </citation>
    <scope>NUCLEOTIDE SEQUENCE [MRNA] (ISOFORM 1)</scope>
</reference>
<reference key="2">
    <citation type="journal article" date="1995" name="Mol. Cell. Biol.">
        <title>Four subunits that are shared by the three classes of RNA polymerase are functionally interchangeable between Homo sapiens and Saccharomyces cerevisiae.</title>
        <authorList>
            <person name="Shpakovski G.V."/>
            <person name="Acker J."/>
            <person name="Wintzerith M."/>
            <person name="Lacroix J.F."/>
            <person name="Thuriaux P."/>
            <person name="Vigneron M."/>
        </authorList>
    </citation>
    <scope>NUCLEOTIDE SEQUENCE [MRNA] (ISOFORM 1)</scope>
</reference>
<reference key="3">
    <citation type="submission" date="1999-12" db="EMBL/GenBank/DDBJ databases">
        <title>Organization of genes encoding subunits of eucaryotic nuclear RNA polymerases shows non random intron distribution and correlates with the subunit modular structure.</title>
        <authorList>
            <person name="Shpakovski G.V."/>
            <person name="Lebedenko E.N."/>
            <person name="Grandemange S."/>
            <person name="Schaller S."/>
            <person name="Vigneron M."/>
            <person name="Kedinger C."/>
        </authorList>
    </citation>
    <scope>NUCLEOTIDE SEQUENCE [GENOMIC DNA]</scope>
    <source>
        <tissue>Placenta</tissue>
    </source>
</reference>
<reference key="4">
    <citation type="journal article" date="2006" name="Nature">
        <title>The DNA sequence, annotation and analysis of human chromosome 3.</title>
        <authorList>
            <person name="Muzny D.M."/>
            <person name="Scherer S.E."/>
            <person name="Kaul R."/>
            <person name="Wang J."/>
            <person name="Yu J."/>
            <person name="Sudbrak R."/>
            <person name="Buhay C.J."/>
            <person name="Chen R."/>
            <person name="Cree A."/>
            <person name="Ding Y."/>
            <person name="Dugan-Rocha S."/>
            <person name="Gill R."/>
            <person name="Gunaratne P."/>
            <person name="Harris R.A."/>
            <person name="Hawes A.C."/>
            <person name="Hernandez J."/>
            <person name="Hodgson A.V."/>
            <person name="Hume J."/>
            <person name="Jackson A."/>
            <person name="Khan Z.M."/>
            <person name="Kovar-Smith C."/>
            <person name="Lewis L.R."/>
            <person name="Lozado R.J."/>
            <person name="Metzker M.L."/>
            <person name="Milosavljevic A."/>
            <person name="Miner G.R."/>
            <person name="Morgan M.B."/>
            <person name="Nazareth L.V."/>
            <person name="Scott G."/>
            <person name="Sodergren E."/>
            <person name="Song X.-Z."/>
            <person name="Steffen D."/>
            <person name="Wei S."/>
            <person name="Wheeler D.A."/>
            <person name="Wright M.W."/>
            <person name="Worley K.C."/>
            <person name="Yuan Y."/>
            <person name="Zhang Z."/>
            <person name="Adams C.Q."/>
            <person name="Ansari-Lari M.A."/>
            <person name="Ayele M."/>
            <person name="Brown M.J."/>
            <person name="Chen G."/>
            <person name="Chen Z."/>
            <person name="Clendenning J."/>
            <person name="Clerc-Blankenburg K.P."/>
            <person name="Chen R."/>
            <person name="Chen Z."/>
            <person name="Davis C."/>
            <person name="Delgado O."/>
            <person name="Dinh H.H."/>
            <person name="Dong W."/>
            <person name="Draper H."/>
            <person name="Ernst S."/>
            <person name="Fu G."/>
            <person name="Gonzalez-Garay M.L."/>
            <person name="Garcia D.K."/>
            <person name="Gillett W."/>
            <person name="Gu J."/>
            <person name="Hao B."/>
            <person name="Haugen E."/>
            <person name="Havlak P."/>
            <person name="He X."/>
            <person name="Hennig S."/>
            <person name="Hu S."/>
            <person name="Huang W."/>
            <person name="Jackson L.R."/>
            <person name="Jacob L.S."/>
            <person name="Kelly S.H."/>
            <person name="Kube M."/>
            <person name="Levy R."/>
            <person name="Li Z."/>
            <person name="Liu B."/>
            <person name="Liu J."/>
            <person name="Liu W."/>
            <person name="Lu J."/>
            <person name="Maheshwari M."/>
            <person name="Nguyen B.-V."/>
            <person name="Okwuonu G.O."/>
            <person name="Palmeiri A."/>
            <person name="Pasternak S."/>
            <person name="Perez L.M."/>
            <person name="Phelps K.A."/>
            <person name="Plopper F.J."/>
            <person name="Qiang B."/>
            <person name="Raymond C."/>
            <person name="Rodriguez R."/>
            <person name="Saenphimmachak C."/>
            <person name="Santibanez J."/>
            <person name="Shen H."/>
            <person name="Shen Y."/>
            <person name="Subramanian S."/>
            <person name="Tabor P.E."/>
            <person name="Verduzco D."/>
            <person name="Waldron L."/>
            <person name="Wang J."/>
            <person name="Wang J."/>
            <person name="Wang Q."/>
            <person name="Williams G.A."/>
            <person name="Wong G.K.-S."/>
            <person name="Yao Z."/>
            <person name="Zhang J."/>
            <person name="Zhang X."/>
            <person name="Zhao G."/>
            <person name="Zhou J."/>
            <person name="Zhou Y."/>
            <person name="Nelson D."/>
            <person name="Lehrach H."/>
            <person name="Reinhardt R."/>
            <person name="Naylor S.L."/>
            <person name="Yang H."/>
            <person name="Olson M."/>
            <person name="Weinstock G."/>
            <person name="Gibbs R.A."/>
        </authorList>
    </citation>
    <scope>NUCLEOTIDE SEQUENCE [LARGE SCALE GENOMIC DNA]</scope>
</reference>
<reference key="5">
    <citation type="journal article" date="2004" name="Genome Res.">
        <title>The status, quality, and expansion of the NIH full-length cDNA project: the Mammalian Gene Collection (MGC).</title>
        <authorList>
            <consortium name="The MGC Project Team"/>
        </authorList>
    </citation>
    <scope>NUCLEOTIDE SEQUENCE [LARGE SCALE MRNA] (ISOFORM 1)</scope>
    <source>
        <tissue>Placenta</tissue>
    </source>
</reference>
<reference key="6">
    <citation type="submission" date="2005-08" db="UniProtKB">
        <authorList>
            <person name="Bienvenut W.V."/>
        </authorList>
    </citation>
    <scope>PROTEIN SEQUENCE OF 2-13 AND 99-111</scope>
    <scope>CLEAVAGE OF INITIATOR METHIONINE</scope>
    <scope>ACETYLATION AT ALA-2</scope>
    <scope>SUBCELLULAR LOCATION</scope>
    <scope>IDENTIFICATION BY MASS SPECTROMETRY</scope>
    <source>
        <tissue>B-cell lymphoma</tissue>
        <tissue>Cervix carcinoma</tissue>
    </source>
</reference>
<reference key="7">
    <citation type="journal article" date="1998" name="J. Biol. Chem.">
        <title>Immunoaffinity purification and functional characterization of human transcription factor IIH and RNA polymerase II from clonal cell lines that conditionally express epitope-tagged subunits of the multiprotein complexes.</title>
        <authorList>
            <person name="Kershnar E."/>
            <person name="Wu S.-Y."/>
            <person name="Chiang C.-M."/>
        </authorList>
    </citation>
    <scope>FUNCTION</scope>
    <scope>IDENTIFICATION IN THE RNA POLYMERASE II CORE-COMPLEX</scope>
    <scope>SUBCELLULAR LOCATION</scope>
</reference>
<reference key="8">
    <citation type="journal article" date="2010" name="Genome Res.">
        <title>Defining the RNA polymerase III transcriptome: Genome-wide localization of the RNA polymerase III transcription machinery in human cells.</title>
        <authorList>
            <person name="Canella D."/>
            <person name="Praz V."/>
            <person name="Reina J.H."/>
            <person name="Cousin P."/>
            <person name="Hernandez N."/>
        </authorList>
    </citation>
    <scope>FUNCTION OF POL III</scope>
</reference>
<reference key="9">
    <citation type="journal article" date="2006" name="Mol. Cell. Biol.">
        <title>RNA polymerase I-specific subunit CAST/hPAF49 has a role in the activation of transcription by upstream binding factor.</title>
        <authorList>
            <person name="Panov K.I."/>
            <person name="Panova T.B."/>
            <person name="Gadal O."/>
            <person name="Nishiyama K."/>
            <person name="Saito T."/>
            <person name="Russell J."/>
            <person name="Zomerdijk J.C.B.M."/>
        </authorList>
    </citation>
    <scope>FUNCTION</scope>
    <scope>IDENTIFICATION IN THE RNA POL I COMPLEX</scope>
</reference>
<reference key="10">
    <citation type="journal article" date="2009" name="Anal. Chem.">
        <title>Lys-N and trypsin cover complementary parts of the phosphoproteome in a refined SCX-based approach.</title>
        <authorList>
            <person name="Gauci S."/>
            <person name="Helbig A.O."/>
            <person name="Slijper M."/>
            <person name="Krijgsveld J."/>
            <person name="Heck A.J."/>
            <person name="Mohammed S."/>
        </authorList>
    </citation>
    <scope>ACETYLATION [LARGE SCALE ANALYSIS] AT ALA-2</scope>
    <scope>CLEAVAGE OF INITIATOR METHIONINE [LARGE SCALE ANALYSIS]</scope>
    <scope>IDENTIFICATION BY MASS SPECTROMETRY [LARGE SCALE ANALYSIS]</scope>
</reference>
<reference key="11">
    <citation type="journal article" date="2011" name="BMC Syst. Biol.">
        <title>Initial characterization of the human central proteome.</title>
        <authorList>
            <person name="Burkard T.R."/>
            <person name="Planyavsky M."/>
            <person name="Kaupe I."/>
            <person name="Breitwieser F.P."/>
            <person name="Buerckstuemmer T."/>
            <person name="Bennett K.L."/>
            <person name="Superti-Furga G."/>
            <person name="Colinge J."/>
        </authorList>
    </citation>
    <scope>IDENTIFICATION BY MASS SPECTROMETRY [LARGE SCALE ANALYSIS]</scope>
</reference>
<reference key="12">
    <citation type="journal article" date="2012" name="Mol. Cell. Proteomics">
        <title>Comparative large-scale characterisation of plant vs. mammal proteins reveals similar and idiosyncratic N-alpha acetylation features.</title>
        <authorList>
            <person name="Bienvenut W.V."/>
            <person name="Sumpton D."/>
            <person name="Martinez A."/>
            <person name="Lilla S."/>
            <person name="Espagne C."/>
            <person name="Meinnel T."/>
            <person name="Giglione C."/>
        </authorList>
    </citation>
    <scope>ACETYLATION [LARGE SCALE ANALYSIS] AT ALA-2</scope>
    <scope>CLEAVAGE OF INITIATOR METHIONINE [LARGE SCALE ANALYSIS]</scope>
    <scope>IDENTIFICATION BY MASS SPECTROMETRY [LARGE SCALE ANALYSIS]</scope>
</reference>
<reference key="13">
    <citation type="journal article" date="2012" name="Proc. Natl. Acad. Sci. U.S.A.">
        <title>N-terminal acetylome analyses and functional insights of the N-terminal acetyltransferase NatB.</title>
        <authorList>
            <person name="Van Damme P."/>
            <person name="Lasa M."/>
            <person name="Polevoda B."/>
            <person name="Gazquez C."/>
            <person name="Elosegui-Artola A."/>
            <person name="Kim D.S."/>
            <person name="De Juan-Pardo E."/>
            <person name="Demeyer K."/>
            <person name="Hole K."/>
            <person name="Larrea E."/>
            <person name="Timmerman E."/>
            <person name="Prieto J."/>
            <person name="Arnesen T."/>
            <person name="Sherman F."/>
            <person name="Gevaert K."/>
            <person name="Aldabe R."/>
        </authorList>
    </citation>
    <scope>ACETYLATION [LARGE SCALE ANALYSIS] AT ALA-2</scope>
    <scope>CLEAVAGE OF INITIATOR METHIONINE [LARGE SCALE ANALYSIS]</scope>
    <scope>IDENTIFICATION BY MASS SPECTROMETRY [LARGE SCALE ANALYSIS]</scope>
</reference>
<reference key="14">
    <citation type="journal article" date="2006" name="J. Biol. Chem.">
        <title>Structural, biochemical, and dynamic characterizations of the hRPB8 subunit of human RNA polymerases.</title>
        <authorList>
            <person name="Kang X."/>
            <person name="Hu Y."/>
            <person name="Li Y."/>
            <person name="Guo X."/>
            <person name="Jiang X."/>
            <person name="Lai L."/>
            <person name="Xia B."/>
            <person name="Jin C."/>
        </authorList>
    </citation>
    <scope>STRUCTURE BY NMR</scope>
    <scope>DNA-BINDING REGION</scope>
    <scope>SUBUNIT</scope>
    <scope>INTERACTION WITH POLR2A</scope>
</reference>
<reference key="15">
    <citation type="journal article" date="2016" name="Nature">
        <title>Near-atomic resolution visualization of human transcription promoter opening.</title>
        <authorList>
            <person name="He Y."/>
            <person name="Yan C."/>
            <person name="Fang J."/>
            <person name="Inouye C."/>
            <person name="Tjian R."/>
            <person name="Ivanov I."/>
            <person name="Nogales E."/>
        </authorList>
    </citation>
    <scope>STRUCTURE BY ELECTRON MICROSCOPY (3.90 ANGSTROMS)</scope>
    <scope>FUNCTION OF POL II</scope>
    <scope>SUBUNIT</scope>
</reference>
<reference key="16">
    <citation type="journal article" date="2018" name="Nat. Struct. Mol. Biol.">
        <title>Architecture of Pol II(G) and molecular mechanism of transcription regulation by Gdown1.</title>
        <authorList>
            <person name="Jishage M."/>
            <person name="Yu X."/>
            <person name="Shi Y."/>
            <person name="Ganesan S.J."/>
            <person name="Chen W.Y."/>
            <person name="Sali A."/>
            <person name="Chait B.T."/>
            <person name="Asturias F.J."/>
            <person name="Roeder R.G."/>
        </authorList>
    </citation>
    <scope>STRUCTURE BY ELECTRON MICROSCOPY (3.90 ANGSTROMS)</scope>
    <scope>FUNCTION OF POL II</scope>
    <scope>SUBUNIT</scope>
</reference>
<reference key="17">
    <citation type="journal article" date="2020" name="Nat. Commun.">
        <title>Structure of human RNA polymerase III.</title>
        <authorList>
            <person name="Ramsay E.P."/>
            <person name="Abascal-Palacios G."/>
            <person name="Daiss J.L."/>
            <person name="King H."/>
            <person name="Gouge J."/>
            <person name="Pilsl M."/>
            <person name="Beuron F."/>
            <person name="Morris E."/>
            <person name="Gunkel P."/>
            <person name="Engel C."/>
            <person name="Vannini A."/>
        </authorList>
    </citation>
    <scope>STRUCTURE BY ELECTRON MICROSCOPY (4.00 ANGSTROMS)</scope>
    <scope>SUBUNIT</scope>
    <scope>SUBCELLULAR LOCATION</scope>
</reference>
<reference key="18">
    <citation type="journal article" date="2021" name="Cell Discov.">
        <title>Structure of the human RNA polymerase I elongation complex.</title>
        <authorList>
            <person name="Zhao D."/>
            <person name="Liu W."/>
            <person name="Chen K."/>
            <person name="Wu Z."/>
            <person name="Yang H."/>
            <person name="Xu Y."/>
        </authorList>
    </citation>
    <scope>STRUCTURE BY ELECTRON MICROSCOPY (2.81 ANGSTROMS)</scope>
    <scope>FUNCTION OF POL I</scope>
    <scope>SUBUNIT</scope>
</reference>
<reference key="19">
    <citation type="journal article" date="2021" name="Cell Res.">
        <title>Structure of human RNA polymerase III elongation complex.</title>
        <authorList>
            <person name="Li L."/>
            <person name="Yu Z."/>
            <person name="Zhao D."/>
            <person name="Ren Y."/>
            <person name="Hou H."/>
            <person name="Xu Y."/>
        </authorList>
    </citation>
    <scope>STRUCTURE BY ELECTRON MICROSCOPY (3.35 ANGSTROMS)</scope>
    <scope>SUBUNIT</scope>
</reference>
<reference key="20">
    <citation type="journal article" date="2021" name="Nat. Commun.">
        <title>Structural insights into RNA polymerase III-mediated transcription termination through trapping poly-deoxythymidine.</title>
        <authorList>
            <person name="Hou H."/>
            <person name="Li Y."/>
            <person name="Wang M."/>
            <person name="Liu A."/>
            <person name="Yu Z."/>
            <person name="Chen K."/>
            <person name="Zhao D."/>
            <person name="Xu Y."/>
        </authorList>
    </citation>
    <scope>STRUCTURE BY ELECTRON MICROSCOPY (3.60 ANGSTROMS)</scope>
    <scope>SUBUNIT</scope>
</reference>
<reference key="21">
    <citation type="journal article" date="2021" name="Nat. Struct. Mol. Biol.">
        <title>Cryo-EM structures of human RNA polymerase III in its unbound and transcribing states.</title>
        <authorList>
            <person name="Girbig M."/>
            <person name="Misiaszek A.D."/>
            <person name="Vorlander M.K."/>
            <person name="Lafita A."/>
            <person name="Grotsch H."/>
            <person name="Baudin F."/>
            <person name="Bateman A."/>
            <person name="Muller C.W."/>
        </authorList>
    </citation>
    <scope>STRUCTURE BY ELECTRON MICROSCOPY (2.80 ANGSTROMS)</scope>
    <scope>SUBUNIT</scope>
</reference>
<reference key="22">
    <citation type="journal article" date="2021" name="Nat. Struct. Mol. Biol.">
        <title>Cryo-EM structures of human RNA polymerase I.</title>
        <authorList>
            <person name="Misiaszek A.D."/>
            <person name="Girbig M."/>
            <person name="Grotsch H."/>
            <person name="Baudin F."/>
            <person name="Murciano B."/>
            <person name="Lafita A."/>
            <person name="Muller C.W."/>
        </authorList>
    </citation>
    <scope>STRUCTURE BY ELECTRON MICROSCOPY (2.70 ANGSTROMS)</scope>
    <scope>FUNCTION OF POL I</scope>
    <scope>SUBUNIT</scope>
    <scope>SUBCELLULAR LOCATION</scope>
</reference>
<reference key="23">
    <citation type="journal article" date="2021" name="Nat. Struct. Mol. Biol.">
        <title>Structural insights into transcriptional regulation of human RNA polymerase III.</title>
        <authorList>
            <person name="Wang Q."/>
            <person name="Li S."/>
            <person name="Wan F."/>
            <person name="Xu Y."/>
            <person name="Wu Z."/>
            <person name="Cao M."/>
            <person name="Lan P."/>
            <person name="Lei M."/>
            <person name="Wu J."/>
        </authorList>
    </citation>
    <scope>STRUCTURE BY ELECTRON MICROSCOPY (2.90 ANGSTROMS)</scope>
    <scope>SUBUNIT</scope>
</reference>
<reference key="24">
    <citation type="journal article" date="2022" name="Life. Sci Alliance">
        <title>The human RNA polymerase I structure reveals an HMG-like docking domain specific to metazoans.</title>
        <authorList>
            <person name="Daiss J.L."/>
            <person name="Pilsl M."/>
            <person name="Straub K."/>
            <person name="Bleckmann A."/>
            <person name="Hocherl M."/>
            <person name="Heiss F.B."/>
            <person name="Abascal-Palacios G."/>
            <person name="Ramsay E.P."/>
            <person name="Tluckova K."/>
            <person name="Mars J.C."/>
            <person name="Furtges T."/>
            <person name="Bruckmann A."/>
            <person name="Rudack T."/>
            <person name="Bernecky C."/>
            <person name="Lamour V."/>
            <person name="Panov K."/>
            <person name="Vannini A."/>
            <person name="Moss T."/>
            <person name="Engel C."/>
        </authorList>
    </citation>
    <scope>STRUCTURE BY ELECTRON MICROSCOPY (4.09 ANGSTROMS)</scope>
    <scope>FUNCTION OF POL I</scope>
    <scope>SUBUNIT</scope>
    <scope>SUBCELLULAR LOCATION</scope>
</reference>
<sequence length="150" mass="17143">MAGILFEDIFDVKDIDPEGKKFDRVSRLHCESESFKMDLILDVNIQIYPVDLGDKFRLVIASTLYEDGTLDDGEYNPTDDRPSRADQFEYVMYGKVYRIEGDETSTEAATRLSAYVSYGGLLMRLQGDANNLHGFEVDSRVYLLMKKLAF</sequence>
<feature type="initiator methionine" description="Removed" evidence="15 20 21 22">
    <location>
        <position position="1"/>
    </location>
</feature>
<feature type="chain" id="PRO_0000073997" description="DNA-directed RNA polymerases I, II, and III subunit RPABC3">
    <location>
        <begin position="2"/>
        <end position="150"/>
    </location>
</feature>
<feature type="region of interest" description="Non-specific ssDNA binding">
    <location>
        <begin position="16"/>
        <end position="40"/>
    </location>
</feature>
<feature type="modified residue" description="N-acetylalanine" evidence="15 20 21 22">
    <location>
        <position position="2"/>
    </location>
</feature>
<feature type="splice variant" id="VSP_055017" description="In isoform 3 and isoform 5." evidence="16">
    <location>
        <begin position="1"/>
        <end position="36"/>
    </location>
</feature>
<feature type="splice variant" id="VSP_055018" description="In isoform 2 and isoform 5." evidence="16">
    <original>RADQFEYVMYGKVYRIEGDETSTEAATRL</original>
    <variation>S</variation>
    <location>
        <begin position="84"/>
        <end position="112"/>
    </location>
</feature>
<feature type="splice variant" id="VSP_055019" description="In isoform 4." evidence="16">
    <original>SAYVSYGGLLMRLQGDANNLHGFEVDSRVYLLMKKLAF</original>
    <variation>LRLRAAEWQCSRITGWGLLFQLCVRVLWGPAHEAAGGCQQPAWIRGGLQSLSPDEEASLLNLA</variation>
    <location>
        <begin position="113"/>
        <end position="150"/>
    </location>
</feature>
<feature type="sequence conflict" description="In Ref. 1; AAA91458." evidence="16" ref="1">
    <original>G</original>
    <variation>A</variation>
    <location>
        <position position="19"/>
    </location>
</feature>
<feature type="strand" evidence="26">
    <location>
        <begin position="4"/>
        <end position="15"/>
    </location>
</feature>
<feature type="strand" evidence="26">
    <location>
        <begin position="25"/>
        <end position="36"/>
    </location>
</feature>
<feature type="strand" evidence="26">
    <location>
        <begin position="38"/>
        <end position="44"/>
    </location>
</feature>
<feature type="turn" evidence="26">
    <location>
        <begin position="45"/>
        <end position="47"/>
    </location>
</feature>
<feature type="strand" evidence="23">
    <location>
        <begin position="48"/>
        <end position="50"/>
    </location>
</feature>
<feature type="strand" evidence="26">
    <location>
        <begin position="55"/>
        <end position="62"/>
    </location>
</feature>
<feature type="strand" evidence="25">
    <location>
        <begin position="64"/>
        <end position="67"/>
    </location>
</feature>
<feature type="turn" evidence="23">
    <location>
        <begin position="71"/>
        <end position="73"/>
    </location>
</feature>
<feature type="strand" evidence="23">
    <location>
        <begin position="75"/>
        <end position="77"/>
    </location>
</feature>
<feature type="helix" evidence="26">
    <location>
        <begin position="85"/>
        <end position="87"/>
    </location>
</feature>
<feature type="strand" evidence="26">
    <location>
        <begin position="89"/>
        <end position="92"/>
    </location>
</feature>
<feature type="strand" evidence="26">
    <location>
        <begin position="94"/>
        <end position="101"/>
    </location>
</feature>
<feature type="strand" evidence="26">
    <location>
        <begin position="104"/>
        <end position="106"/>
    </location>
</feature>
<feature type="strand" evidence="26">
    <location>
        <begin position="112"/>
        <end position="118"/>
    </location>
</feature>
<feature type="strand" evidence="26">
    <location>
        <begin position="121"/>
        <end position="127"/>
    </location>
</feature>
<feature type="turn" evidence="24">
    <location>
        <begin position="129"/>
        <end position="131"/>
    </location>
</feature>
<feature type="strand" evidence="26">
    <location>
        <begin position="140"/>
        <end position="147"/>
    </location>
</feature>
<protein>
    <recommendedName>
        <fullName>DNA-directed RNA polymerases I, II, and III subunit RPABC3</fullName>
        <shortName>RNA polymerases I, II, and III subunit ABC3</shortName>
    </recommendedName>
    <alternativeName>
        <fullName>DNA-directed RNA polymerase II subunit H</fullName>
    </alternativeName>
    <alternativeName>
        <fullName>DNA-directed RNA polymerases I, II, and III 17.1 kDa polypeptide</fullName>
    </alternativeName>
    <alternativeName>
        <fullName>RPB17</fullName>
    </alternativeName>
    <alternativeName>
        <fullName>RPB8 homolog</fullName>
        <shortName>hRPB8</shortName>
    </alternativeName>
</protein>
<accession>P52434</accession>
<accession>C9J413</accession>
<accession>C9JBJ6</accession>
<accession>C9JCU7</accession>
<accession>C9JUA8</accession>
<accession>P53802</accession>
<accession>Q969R0</accession>
<proteinExistence type="evidence at protein level"/>
<dbReference type="EMBL" id="U37689">
    <property type="protein sequence ID" value="AAA91458.1"/>
    <property type="molecule type" value="mRNA"/>
</dbReference>
<dbReference type="EMBL" id="Z49199">
    <property type="protein sequence ID" value="CAA89060.1"/>
    <property type="molecule type" value="mRNA"/>
</dbReference>
<dbReference type="EMBL" id="AJ252079">
    <property type="protein sequence ID" value="CAB92189.1"/>
    <property type="molecule type" value="Genomic_DNA"/>
</dbReference>
<dbReference type="EMBL" id="AJ252080">
    <property type="protein sequence ID" value="CAB92189.1"/>
    <property type="status" value="JOINED"/>
    <property type="molecule type" value="Genomic_DNA"/>
</dbReference>
<dbReference type="EMBL" id="AC078797">
    <property type="status" value="NOT_ANNOTATED_CDS"/>
    <property type="molecule type" value="Genomic_DNA"/>
</dbReference>
<dbReference type="EMBL" id="BC000739">
    <property type="protein sequence ID" value="AAH00739.1"/>
    <property type="molecule type" value="mRNA"/>
</dbReference>
<dbReference type="CCDS" id="CCDS3264.1">
    <molecule id="P52434-1"/>
</dbReference>
<dbReference type="CCDS" id="CCDS63859.1">
    <molecule id="P52434-4"/>
</dbReference>
<dbReference type="CCDS" id="CCDS63860.1">
    <molecule id="P52434-2"/>
</dbReference>
<dbReference type="CCDS" id="CCDS63861.1">
    <molecule id="P52434-3"/>
</dbReference>
<dbReference type="CCDS" id="CCDS63862.1">
    <molecule id="P52434-5"/>
</dbReference>
<dbReference type="PIR" id="S55370">
    <property type="entry name" value="S55370"/>
</dbReference>
<dbReference type="RefSeq" id="NP_001265627.1">
    <molecule id="P52434-4"/>
    <property type="nucleotide sequence ID" value="NM_001278698.2"/>
</dbReference>
<dbReference type="RefSeq" id="NP_001265628.1">
    <molecule id="P52434-3"/>
    <property type="nucleotide sequence ID" value="NM_001278699.3"/>
</dbReference>
<dbReference type="RefSeq" id="NP_001265629.1">
    <molecule id="P52434-3"/>
    <property type="nucleotide sequence ID" value="NM_001278700.2"/>
</dbReference>
<dbReference type="RefSeq" id="NP_001265643.1">
    <molecule id="P52434-2"/>
    <property type="nucleotide sequence ID" value="NM_001278714.2"/>
</dbReference>
<dbReference type="RefSeq" id="NP_001265644.1">
    <molecule id="P52434-5"/>
    <property type="nucleotide sequence ID" value="NM_001278715.2"/>
</dbReference>
<dbReference type="RefSeq" id="NP_001376505.1">
    <molecule id="P52434-1"/>
    <property type="nucleotide sequence ID" value="NM_001389576.1"/>
</dbReference>
<dbReference type="RefSeq" id="NP_001376507.1">
    <molecule id="P52434-1"/>
    <property type="nucleotide sequence ID" value="NM_001389578.1"/>
</dbReference>
<dbReference type="RefSeq" id="NP_001376508.1">
    <molecule id="P52434-1"/>
    <property type="nucleotide sequence ID" value="NM_001389579.1"/>
</dbReference>
<dbReference type="RefSeq" id="NP_001376510.1">
    <molecule id="P52434-1"/>
    <property type="nucleotide sequence ID" value="NM_001389581.1"/>
</dbReference>
<dbReference type="RefSeq" id="NP_001376511.1">
    <molecule id="P52434-1"/>
    <property type="nucleotide sequence ID" value="NM_001389582.1"/>
</dbReference>
<dbReference type="RefSeq" id="NP_001376512.1">
    <molecule id="P52434-1"/>
    <property type="nucleotide sequence ID" value="NM_001389583.1"/>
</dbReference>
<dbReference type="RefSeq" id="NP_001376513.1">
    <molecule id="P52434-1"/>
    <property type="nucleotide sequence ID" value="NM_001389584.1"/>
</dbReference>
<dbReference type="RefSeq" id="NP_001376514.1">
    <molecule id="P52434-3"/>
    <property type="nucleotide sequence ID" value="NM_001389585.1"/>
</dbReference>
<dbReference type="RefSeq" id="NP_001376515.1">
    <molecule id="P52434-3"/>
    <property type="nucleotide sequence ID" value="NM_001389586.1"/>
</dbReference>
<dbReference type="RefSeq" id="NP_001376516.1">
    <molecule id="P52434-3"/>
    <property type="nucleotide sequence ID" value="NM_001389587.1"/>
</dbReference>
<dbReference type="RefSeq" id="NP_001376517.1">
    <molecule id="P52434-3"/>
    <property type="nucleotide sequence ID" value="NM_001389588.1"/>
</dbReference>
<dbReference type="RefSeq" id="NP_006223.2">
    <molecule id="P52434-1"/>
    <property type="nucleotide sequence ID" value="NM_006232.4"/>
</dbReference>
<dbReference type="RefSeq" id="XP_006713729.1">
    <molecule id="P52434-4"/>
    <property type="nucleotide sequence ID" value="XM_006713666.4"/>
</dbReference>
<dbReference type="RefSeq" id="XP_006713730.1">
    <molecule id="P52434-4"/>
    <property type="nucleotide sequence ID" value="XM_006713667.3"/>
</dbReference>
<dbReference type="RefSeq" id="XP_016862125.1">
    <molecule id="P52434-2"/>
    <property type="nucleotide sequence ID" value="XM_017006636.3"/>
</dbReference>
<dbReference type="RefSeq" id="XP_016862126.1">
    <property type="nucleotide sequence ID" value="XM_017006637.1"/>
</dbReference>
<dbReference type="RefSeq" id="XP_047304297.1">
    <molecule id="P52434-4"/>
    <property type="nucleotide sequence ID" value="XM_047448341.1"/>
</dbReference>
<dbReference type="RefSeq" id="XP_047304298.1">
    <molecule id="P52434-4"/>
    <property type="nucleotide sequence ID" value="XM_047448342.1"/>
</dbReference>
<dbReference type="RefSeq" id="XP_047304299.1">
    <molecule id="P52434-4"/>
    <property type="nucleotide sequence ID" value="XM_047448343.1"/>
</dbReference>
<dbReference type="RefSeq" id="XP_054202886.1">
    <molecule id="P52434-4"/>
    <property type="nucleotide sequence ID" value="XM_054346911.1"/>
</dbReference>
<dbReference type="RefSeq" id="XP_054202887.1">
    <molecule id="P52434-4"/>
    <property type="nucleotide sequence ID" value="XM_054346912.1"/>
</dbReference>
<dbReference type="RefSeq" id="XP_054202888.1">
    <molecule id="P52434-4"/>
    <property type="nucleotide sequence ID" value="XM_054346913.1"/>
</dbReference>
<dbReference type="RefSeq" id="XP_054202889.1">
    <molecule id="P52434-4"/>
    <property type="nucleotide sequence ID" value="XM_054346914.1"/>
</dbReference>
<dbReference type="RefSeq" id="XP_054202890.1">
    <molecule id="P52434-4"/>
    <property type="nucleotide sequence ID" value="XM_054346915.1"/>
</dbReference>
<dbReference type="RefSeq" id="XP_054202891.1">
    <molecule id="P52434-2"/>
    <property type="nucleotide sequence ID" value="XM_054346916.1"/>
</dbReference>
<dbReference type="PDB" id="2F3I">
    <property type="method" value="NMR"/>
    <property type="chains" value="A=1-150"/>
</dbReference>
<dbReference type="PDB" id="5IY6">
    <property type="method" value="EM"/>
    <property type="resolution" value="7.20 A"/>
    <property type="chains" value="H=1-150"/>
</dbReference>
<dbReference type="PDB" id="5IY7">
    <property type="method" value="EM"/>
    <property type="resolution" value="8.60 A"/>
    <property type="chains" value="H=1-150"/>
</dbReference>
<dbReference type="PDB" id="5IY8">
    <property type="method" value="EM"/>
    <property type="resolution" value="7.90 A"/>
    <property type="chains" value="H=1-150"/>
</dbReference>
<dbReference type="PDB" id="5IY9">
    <property type="method" value="EM"/>
    <property type="resolution" value="6.30 A"/>
    <property type="chains" value="H=1-150"/>
</dbReference>
<dbReference type="PDB" id="5IYA">
    <property type="method" value="EM"/>
    <property type="resolution" value="5.40 A"/>
    <property type="chains" value="H=1-150"/>
</dbReference>
<dbReference type="PDB" id="5IYB">
    <property type="method" value="EM"/>
    <property type="resolution" value="3.90 A"/>
    <property type="chains" value="H=1-150"/>
</dbReference>
<dbReference type="PDB" id="5IYC">
    <property type="method" value="EM"/>
    <property type="resolution" value="3.90 A"/>
    <property type="chains" value="H=1-150"/>
</dbReference>
<dbReference type="PDB" id="5IYD">
    <property type="method" value="EM"/>
    <property type="resolution" value="3.90 A"/>
    <property type="chains" value="H=1-150"/>
</dbReference>
<dbReference type="PDB" id="6DRD">
    <property type="method" value="EM"/>
    <property type="resolution" value="3.90 A"/>
    <property type="chains" value="H=1-150"/>
</dbReference>
<dbReference type="PDB" id="6O9L">
    <property type="method" value="EM"/>
    <property type="resolution" value="7.20 A"/>
    <property type="chains" value="H=1-150"/>
</dbReference>
<dbReference type="PDB" id="6XRE">
    <property type="method" value="EM"/>
    <property type="resolution" value="4.60 A"/>
    <property type="chains" value="H=1-150"/>
</dbReference>
<dbReference type="PDB" id="7A6H">
    <property type="method" value="EM"/>
    <property type="resolution" value="3.30 A"/>
    <property type="chains" value="H=1-150"/>
</dbReference>
<dbReference type="PDB" id="7AE1">
    <property type="method" value="EM"/>
    <property type="resolution" value="2.80 A"/>
    <property type="chains" value="H=1-150"/>
</dbReference>
<dbReference type="PDB" id="7AE3">
    <property type="method" value="EM"/>
    <property type="resolution" value="3.10 A"/>
    <property type="chains" value="H=1-150"/>
</dbReference>
<dbReference type="PDB" id="7AEA">
    <property type="method" value="EM"/>
    <property type="resolution" value="3.40 A"/>
    <property type="chains" value="H=1-150"/>
</dbReference>
<dbReference type="PDB" id="7AST">
    <property type="method" value="EM"/>
    <property type="resolution" value="4.00 A"/>
    <property type="chains" value="D=1-150"/>
</dbReference>
<dbReference type="PDB" id="7D58">
    <property type="method" value="EM"/>
    <property type="resolution" value="2.90 A"/>
    <property type="chains" value="H=1-150"/>
</dbReference>
<dbReference type="PDB" id="7D59">
    <property type="method" value="EM"/>
    <property type="resolution" value="3.10 A"/>
    <property type="chains" value="H=1-150"/>
</dbReference>
<dbReference type="PDB" id="7DN3">
    <property type="method" value="EM"/>
    <property type="resolution" value="3.50 A"/>
    <property type="chains" value="H=1-150"/>
</dbReference>
<dbReference type="PDB" id="7DU2">
    <property type="method" value="EM"/>
    <property type="resolution" value="3.35 A"/>
    <property type="chains" value="H=1-150"/>
</dbReference>
<dbReference type="PDB" id="7FJI">
    <property type="method" value="EM"/>
    <property type="resolution" value="3.60 A"/>
    <property type="chains" value="H=1-150"/>
</dbReference>
<dbReference type="PDB" id="7FJJ">
    <property type="method" value="EM"/>
    <property type="resolution" value="3.60 A"/>
    <property type="chains" value="H=1-150"/>
</dbReference>
<dbReference type="PDB" id="7LBM">
    <property type="method" value="EM"/>
    <property type="resolution" value="4.80 A"/>
    <property type="chains" value="H=1-150"/>
</dbReference>
<dbReference type="PDB" id="7OB9">
    <property type="method" value="EM"/>
    <property type="resolution" value="2.70 A"/>
    <property type="chains" value="H=1-150"/>
</dbReference>
<dbReference type="PDB" id="7OBA">
    <property type="method" value="EM"/>
    <property type="resolution" value="3.10 A"/>
    <property type="chains" value="H=1-150"/>
</dbReference>
<dbReference type="PDB" id="7OBB">
    <property type="method" value="EM"/>
    <property type="resolution" value="3.30 A"/>
    <property type="chains" value="H=1-150"/>
</dbReference>
<dbReference type="PDB" id="7VBA">
    <property type="method" value="EM"/>
    <property type="resolution" value="2.89 A"/>
    <property type="chains" value="H=1-150"/>
</dbReference>
<dbReference type="PDB" id="7VBB">
    <property type="method" value="EM"/>
    <property type="resolution" value="2.81 A"/>
    <property type="chains" value="H=1-150"/>
</dbReference>
<dbReference type="PDB" id="7VBC">
    <property type="method" value="EM"/>
    <property type="resolution" value="3.01 A"/>
    <property type="chains" value="H=1-150"/>
</dbReference>
<dbReference type="PDB" id="8A43">
    <property type="method" value="EM"/>
    <property type="resolution" value="4.09 A"/>
    <property type="chains" value="H=1-150"/>
</dbReference>
<dbReference type="PDB" id="8ITY">
    <property type="method" value="EM"/>
    <property type="resolution" value="3.90 A"/>
    <property type="chains" value="H=1-150"/>
</dbReference>
<dbReference type="PDB" id="8IUE">
    <property type="method" value="EM"/>
    <property type="resolution" value="4.10 A"/>
    <property type="chains" value="H=1-150"/>
</dbReference>
<dbReference type="PDB" id="8IUH">
    <property type="method" value="EM"/>
    <property type="resolution" value="3.40 A"/>
    <property type="chains" value="H=1-150"/>
</dbReference>
<dbReference type="PDB" id="9EHZ">
    <property type="method" value="EM"/>
    <property type="resolution" value="2.60 A"/>
    <property type="chains" value="H=1-150"/>
</dbReference>
<dbReference type="PDB" id="9EI1">
    <property type="method" value="EM"/>
    <property type="resolution" value="3.20 A"/>
    <property type="chains" value="H=1-150"/>
</dbReference>
<dbReference type="PDB" id="9EI3">
    <property type="method" value="EM"/>
    <property type="resolution" value="3.20 A"/>
    <property type="chains" value="H=1-150"/>
</dbReference>
<dbReference type="PDB" id="9EI4">
    <property type="method" value="EM"/>
    <property type="resolution" value="3.70 A"/>
    <property type="chains" value="H=1-150"/>
</dbReference>
<dbReference type="PDB" id="9FSO">
    <property type="method" value="EM"/>
    <property type="resolution" value="3.28 A"/>
    <property type="chains" value="O=1-150"/>
</dbReference>
<dbReference type="PDB" id="9FSP">
    <property type="method" value="EM"/>
    <property type="resolution" value="3.39 A"/>
    <property type="chains" value="O=1-150"/>
</dbReference>
<dbReference type="PDB" id="9FSQ">
    <property type="method" value="EM"/>
    <property type="resolution" value="3.51 A"/>
    <property type="chains" value="O=1-150"/>
</dbReference>
<dbReference type="PDB" id="9FSR">
    <property type="method" value="EM"/>
    <property type="resolution" value="3.76 A"/>
    <property type="chains" value="O=1-150"/>
</dbReference>
<dbReference type="PDB" id="9FSS">
    <property type="method" value="EM"/>
    <property type="resolution" value="4.14 A"/>
    <property type="chains" value="O=1-150"/>
</dbReference>
<dbReference type="PDBsum" id="2F3I"/>
<dbReference type="PDBsum" id="5IY6"/>
<dbReference type="PDBsum" id="5IY7"/>
<dbReference type="PDBsum" id="5IY8"/>
<dbReference type="PDBsum" id="5IY9"/>
<dbReference type="PDBsum" id="5IYA"/>
<dbReference type="PDBsum" id="5IYB"/>
<dbReference type="PDBsum" id="5IYC"/>
<dbReference type="PDBsum" id="5IYD"/>
<dbReference type="PDBsum" id="6DRD"/>
<dbReference type="PDBsum" id="6O9L"/>
<dbReference type="PDBsum" id="6XRE"/>
<dbReference type="PDBsum" id="7A6H"/>
<dbReference type="PDBsum" id="7AE1"/>
<dbReference type="PDBsum" id="7AE3"/>
<dbReference type="PDBsum" id="7AEA"/>
<dbReference type="PDBsum" id="7AST"/>
<dbReference type="PDBsum" id="7D58"/>
<dbReference type="PDBsum" id="7D59"/>
<dbReference type="PDBsum" id="7DN3"/>
<dbReference type="PDBsum" id="7DU2"/>
<dbReference type="PDBsum" id="7FJI"/>
<dbReference type="PDBsum" id="7FJJ"/>
<dbReference type="PDBsum" id="7LBM"/>
<dbReference type="PDBsum" id="7OB9"/>
<dbReference type="PDBsum" id="7OBA"/>
<dbReference type="PDBsum" id="7OBB"/>
<dbReference type="PDBsum" id="7VBA"/>
<dbReference type="PDBsum" id="7VBB"/>
<dbReference type="PDBsum" id="7VBC"/>
<dbReference type="PDBsum" id="8A43"/>
<dbReference type="PDBsum" id="8ITY"/>
<dbReference type="PDBsum" id="8IUE"/>
<dbReference type="PDBsum" id="8IUH"/>
<dbReference type="PDBsum" id="9EHZ"/>
<dbReference type="PDBsum" id="9EI1"/>
<dbReference type="PDBsum" id="9EI3"/>
<dbReference type="PDBsum" id="9EI4"/>
<dbReference type="PDBsum" id="9FSO"/>
<dbReference type="PDBsum" id="9FSP"/>
<dbReference type="PDBsum" id="9FSQ"/>
<dbReference type="PDBsum" id="9FSR"/>
<dbReference type="PDBsum" id="9FSS"/>
<dbReference type="BMRB" id="P52434"/>
<dbReference type="EMDB" id="EMD-11673"/>
<dbReference type="EMDB" id="EMD-11736"/>
<dbReference type="EMDB" id="EMD-11738"/>
<dbReference type="EMDB" id="EMD-11742"/>
<dbReference type="EMDB" id="EMD-11904"/>
<dbReference type="EMDB" id="EMD-12795"/>
<dbReference type="EMDB" id="EMD-12796"/>
<dbReference type="EMDB" id="EMD-12797"/>
<dbReference type="EMDB" id="EMD-15135"/>
<dbReference type="EMDB" id="EMD-22294"/>
<dbReference type="EMDB" id="EMD-23255"/>
<dbReference type="EMDB" id="EMD-30577"/>
<dbReference type="EMDB" id="EMD-30578"/>
<dbReference type="EMDB" id="EMD-30779"/>
<dbReference type="EMDB" id="EMD-30865"/>
<dbReference type="EMDB" id="EMD-31621"/>
<dbReference type="EMDB" id="EMD-31622"/>
<dbReference type="EMDB" id="EMD-31876"/>
<dbReference type="EMDB" id="EMD-31877"/>
<dbReference type="EMDB" id="EMD-31878"/>
<dbReference type="EMDB" id="EMD-35712"/>
<dbReference type="EMDB" id="EMD-35719"/>
<dbReference type="EMDB" id="EMD-35722"/>
<dbReference type="EMDB" id="EMD-48071"/>
<dbReference type="EMDB" id="EMD-48073"/>
<dbReference type="EMDB" id="EMD-48075"/>
<dbReference type="EMDB" id="EMD-48076"/>
<dbReference type="EMDB" id="EMD-50730"/>
<dbReference type="EMDB" id="EMD-50731"/>
<dbReference type="EMDB" id="EMD-50732"/>
<dbReference type="EMDB" id="EMD-50733"/>
<dbReference type="EMDB" id="EMD-50734"/>
<dbReference type="EMDB" id="EMD-7997"/>
<dbReference type="EMDB" id="EMD-8132"/>
<dbReference type="EMDB" id="EMD-8133"/>
<dbReference type="EMDB" id="EMD-8134"/>
<dbReference type="EMDB" id="EMD-8135"/>
<dbReference type="EMDB" id="EMD-8136"/>
<dbReference type="EMDB" id="EMD-8137"/>
<dbReference type="EMDB" id="EMD-8138"/>
<dbReference type="SMR" id="P52434"/>
<dbReference type="BioGRID" id="111433">
    <property type="interactions" value="234"/>
</dbReference>
<dbReference type="ComplexPortal" id="CPX-2386">
    <property type="entry name" value="DNA-directed RNA polymerase I complex"/>
</dbReference>
<dbReference type="ComplexPortal" id="CPX-2387">
    <property type="entry name" value="DNA-directed RNA polymerase II complex, Pol II(G) variant"/>
</dbReference>
<dbReference type="ComplexPortal" id="CPX-2393">
    <property type="entry name" value="DNA-directed RNA polymerase III complex, POLR3G variant"/>
</dbReference>
<dbReference type="ComplexPortal" id="CPX-7481">
    <property type="entry name" value="DNA-directed RNA polymerase II complex"/>
</dbReference>
<dbReference type="ComplexPortal" id="CPX-7482">
    <property type="entry name" value="DNA-directed RNA polymerase III complex, POLR3GL variant"/>
</dbReference>
<dbReference type="CORUM" id="P52434"/>
<dbReference type="DIP" id="DIP-27556N"/>
<dbReference type="FunCoup" id="P52434">
    <property type="interactions" value="2584"/>
</dbReference>
<dbReference type="IntAct" id="P52434">
    <property type="interactions" value="102"/>
</dbReference>
<dbReference type="MINT" id="P52434"/>
<dbReference type="STRING" id="9606.ENSP00000415536"/>
<dbReference type="iPTMnet" id="P52434"/>
<dbReference type="MetOSite" id="P52434"/>
<dbReference type="PhosphoSitePlus" id="P52434"/>
<dbReference type="SwissPalm" id="P52434"/>
<dbReference type="BioMuta" id="POLR2H"/>
<dbReference type="DMDM" id="20178325"/>
<dbReference type="jPOST" id="P52434"/>
<dbReference type="MassIVE" id="P52434"/>
<dbReference type="PaxDb" id="9606-ENSP00000415536"/>
<dbReference type="PeptideAtlas" id="P52434"/>
<dbReference type="ProteomicsDB" id="11707"/>
<dbReference type="ProteomicsDB" id="56485">
    <molecule id="P52434-1"/>
</dbReference>
<dbReference type="ProteomicsDB" id="8418"/>
<dbReference type="ProteomicsDB" id="9473"/>
<dbReference type="ProteomicsDB" id="9641"/>
<dbReference type="Pumba" id="P52434"/>
<dbReference type="TopDownProteomics" id="P52434-1">
    <molecule id="P52434-1"/>
</dbReference>
<dbReference type="Antibodypedia" id="33820">
    <property type="antibodies" value="286 antibodies from 31 providers"/>
</dbReference>
<dbReference type="DNASU" id="5437"/>
<dbReference type="Ensembl" id="ENST00000429568.1">
    <molecule id="P52434-4"/>
    <property type="protein sequence ID" value="ENSP00000415536.1"/>
    <property type="gene ID" value="ENSG00000163882.10"/>
</dbReference>
<dbReference type="Ensembl" id="ENST00000430783.5">
    <molecule id="P52434-2"/>
    <property type="protein sequence ID" value="ENSP00000411883.1"/>
    <property type="gene ID" value="ENSG00000163882.10"/>
</dbReference>
<dbReference type="Ensembl" id="ENST00000438240.5">
    <molecule id="P52434-3"/>
    <property type="protein sequence ID" value="ENSP00000398622.1"/>
    <property type="gene ID" value="ENSG00000163882.10"/>
</dbReference>
<dbReference type="Ensembl" id="ENST00000443489.5">
    <molecule id="P52434-5"/>
    <property type="protein sequence ID" value="ENSP00000393773.1"/>
    <property type="gene ID" value="ENSG00000163882.10"/>
</dbReference>
<dbReference type="Ensembl" id="ENST00000452961.5">
    <molecule id="P52434-3"/>
    <property type="protein sequence ID" value="ENSP00000399882.1"/>
    <property type="gene ID" value="ENSG00000163882.10"/>
</dbReference>
<dbReference type="Ensembl" id="ENST00000456318.6">
    <molecule id="P52434-1"/>
    <property type="protein sequence ID" value="ENSP00000392913.1"/>
    <property type="gene ID" value="ENSG00000163882.10"/>
</dbReference>
<dbReference type="GeneID" id="5437"/>
<dbReference type="KEGG" id="hsa:5437"/>
<dbReference type="MANE-Select" id="ENST00000456318.6">
    <property type="protein sequence ID" value="ENSP00000392913.1"/>
    <property type="RefSeq nucleotide sequence ID" value="NM_006232.5"/>
    <property type="RefSeq protein sequence ID" value="NP_006223.2"/>
</dbReference>
<dbReference type="UCSC" id="uc032smc.2">
    <molecule id="P52434-1"/>
    <property type="organism name" value="human"/>
</dbReference>
<dbReference type="AGR" id="HGNC:9195"/>
<dbReference type="CTD" id="5437"/>
<dbReference type="DisGeNET" id="5437"/>
<dbReference type="GeneCards" id="POLR2H"/>
<dbReference type="HGNC" id="HGNC:9195">
    <property type="gene designation" value="POLR2H"/>
</dbReference>
<dbReference type="HPA" id="ENSG00000163882">
    <property type="expression patterns" value="Low tissue specificity"/>
</dbReference>
<dbReference type="MIM" id="606023">
    <property type="type" value="gene"/>
</dbReference>
<dbReference type="neXtProt" id="NX_P52434"/>
<dbReference type="OpenTargets" id="ENSG00000163882"/>
<dbReference type="PharmGKB" id="PA33515"/>
<dbReference type="VEuPathDB" id="HostDB:ENSG00000163882"/>
<dbReference type="eggNOG" id="KOG3400">
    <property type="taxonomic scope" value="Eukaryota"/>
</dbReference>
<dbReference type="GeneTree" id="ENSGT00390000018195"/>
<dbReference type="HOGENOM" id="CLU_103864_1_1_1"/>
<dbReference type="InParanoid" id="P52434"/>
<dbReference type="OMA" id="KEDDKGW"/>
<dbReference type="OrthoDB" id="10249565at2759"/>
<dbReference type="PAN-GO" id="P52434">
    <property type="GO annotations" value="3 GO annotations based on evolutionary models"/>
</dbReference>
<dbReference type="PhylomeDB" id="P52434"/>
<dbReference type="TreeFam" id="TF103043"/>
<dbReference type="PathwayCommons" id="P52434"/>
<dbReference type="Reactome" id="R-HSA-112382">
    <property type="pathway name" value="Formation of RNA Pol II elongation complex"/>
</dbReference>
<dbReference type="Reactome" id="R-HSA-113418">
    <property type="pathway name" value="Formation of the Early Elongation Complex"/>
</dbReference>
<dbReference type="Reactome" id="R-HSA-167152">
    <property type="pathway name" value="Formation of HIV elongation complex in the absence of HIV Tat"/>
</dbReference>
<dbReference type="Reactome" id="R-HSA-167158">
    <property type="pathway name" value="Formation of the HIV-1 Early Elongation Complex"/>
</dbReference>
<dbReference type="Reactome" id="R-HSA-167160">
    <property type="pathway name" value="RNA Pol II CTD phosphorylation and interaction with CE during HIV infection"/>
</dbReference>
<dbReference type="Reactome" id="R-HSA-167161">
    <property type="pathway name" value="HIV Transcription Initiation"/>
</dbReference>
<dbReference type="Reactome" id="R-HSA-167162">
    <property type="pathway name" value="RNA Polymerase II HIV Promoter Escape"/>
</dbReference>
<dbReference type="Reactome" id="R-HSA-167172">
    <property type="pathway name" value="Transcription of the HIV genome"/>
</dbReference>
<dbReference type="Reactome" id="R-HSA-167200">
    <property type="pathway name" value="Formation of HIV-1 elongation complex containing HIV-1 Tat"/>
</dbReference>
<dbReference type="Reactome" id="R-HSA-167238">
    <property type="pathway name" value="Pausing and recovery of Tat-mediated HIV elongation"/>
</dbReference>
<dbReference type="Reactome" id="R-HSA-167242">
    <property type="pathway name" value="Abortive elongation of HIV-1 transcript in the absence of Tat"/>
</dbReference>
<dbReference type="Reactome" id="R-HSA-167243">
    <property type="pathway name" value="Tat-mediated HIV elongation arrest and recovery"/>
</dbReference>
<dbReference type="Reactome" id="R-HSA-167246">
    <property type="pathway name" value="Tat-mediated elongation of the HIV-1 transcript"/>
</dbReference>
<dbReference type="Reactome" id="R-HSA-167287">
    <property type="pathway name" value="HIV elongation arrest and recovery"/>
</dbReference>
<dbReference type="Reactome" id="R-HSA-167290">
    <property type="pathway name" value="Pausing and recovery of HIV elongation"/>
</dbReference>
<dbReference type="Reactome" id="R-HSA-168325">
    <property type="pathway name" value="Viral Messenger RNA Synthesis"/>
</dbReference>
<dbReference type="Reactome" id="R-HSA-1834949">
    <property type="pathway name" value="Cytosolic sensors of pathogen-associated DNA"/>
</dbReference>
<dbReference type="Reactome" id="R-HSA-203927">
    <property type="pathway name" value="MicroRNA (miRNA) biogenesis"/>
</dbReference>
<dbReference type="Reactome" id="R-HSA-427413">
    <property type="pathway name" value="NoRC negatively regulates rRNA expression"/>
</dbReference>
<dbReference type="Reactome" id="R-HSA-5250924">
    <property type="pathway name" value="B-WICH complex positively regulates rRNA expression"/>
</dbReference>
<dbReference type="Reactome" id="R-HSA-5578749">
    <property type="pathway name" value="Transcriptional regulation by small RNAs"/>
</dbReference>
<dbReference type="Reactome" id="R-HSA-5601884">
    <property type="pathway name" value="PIWI-interacting RNA (piRNA) biogenesis"/>
</dbReference>
<dbReference type="Reactome" id="R-HSA-5617472">
    <property type="pathway name" value="Activation of anterior HOX genes in hindbrain development during early embryogenesis"/>
</dbReference>
<dbReference type="Reactome" id="R-HSA-674695">
    <property type="pathway name" value="RNA Polymerase II Pre-transcription Events"/>
</dbReference>
<dbReference type="Reactome" id="R-HSA-6781823">
    <property type="pathway name" value="Formation of TC-NER Pre-Incision Complex"/>
</dbReference>
<dbReference type="Reactome" id="R-HSA-6781827">
    <property type="pathway name" value="Transcription-Coupled Nucleotide Excision Repair (TC-NER)"/>
</dbReference>
<dbReference type="Reactome" id="R-HSA-6782135">
    <property type="pathway name" value="Dual incision in TC-NER"/>
</dbReference>
<dbReference type="Reactome" id="R-HSA-6782210">
    <property type="pathway name" value="Gap-filling DNA repair synthesis and ligation in TC-NER"/>
</dbReference>
<dbReference type="Reactome" id="R-HSA-6796648">
    <property type="pathway name" value="TP53 Regulates Transcription of DNA Repair Genes"/>
</dbReference>
<dbReference type="Reactome" id="R-HSA-6803529">
    <property type="pathway name" value="FGFR2 alternative splicing"/>
</dbReference>
<dbReference type="Reactome" id="R-HSA-6807505">
    <property type="pathway name" value="RNA polymerase II transcribes snRNA genes"/>
</dbReference>
<dbReference type="Reactome" id="R-HSA-72086">
    <property type="pathway name" value="mRNA Capping"/>
</dbReference>
<dbReference type="Reactome" id="R-HSA-72163">
    <property type="pathway name" value="mRNA Splicing - Major Pathway"/>
</dbReference>
<dbReference type="Reactome" id="R-HSA-72165">
    <property type="pathway name" value="mRNA Splicing - Minor Pathway"/>
</dbReference>
<dbReference type="Reactome" id="R-HSA-72203">
    <property type="pathway name" value="Processing of Capped Intron-Containing Pre-mRNA"/>
</dbReference>
<dbReference type="Reactome" id="R-HSA-73762">
    <property type="pathway name" value="RNA Polymerase I Transcription Initiation"/>
</dbReference>
<dbReference type="Reactome" id="R-HSA-73772">
    <property type="pathway name" value="RNA Polymerase I Promoter Escape"/>
</dbReference>
<dbReference type="Reactome" id="R-HSA-73776">
    <property type="pathway name" value="RNA Polymerase II Promoter Escape"/>
</dbReference>
<dbReference type="Reactome" id="R-HSA-73779">
    <property type="pathway name" value="RNA Polymerase II Transcription Pre-Initiation And Promoter Opening"/>
</dbReference>
<dbReference type="Reactome" id="R-HSA-73780">
    <property type="pathway name" value="RNA Polymerase III Chain Elongation"/>
</dbReference>
<dbReference type="Reactome" id="R-HSA-73863">
    <property type="pathway name" value="RNA Polymerase I Transcription Termination"/>
</dbReference>
<dbReference type="Reactome" id="R-HSA-73980">
    <property type="pathway name" value="RNA Polymerase III Transcription Termination"/>
</dbReference>
<dbReference type="Reactome" id="R-HSA-749476">
    <property type="pathway name" value="RNA Polymerase III Abortive And Retractive Initiation"/>
</dbReference>
<dbReference type="Reactome" id="R-HSA-75953">
    <property type="pathway name" value="RNA Polymerase II Transcription Initiation"/>
</dbReference>
<dbReference type="Reactome" id="R-HSA-75955">
    <property type="pathway name" value="RNA Polymerase II Transcription Elongation"/>
</dbReference>
<dbReference type="Reactome" id="R-HSA-76042">
    <property type="pathway name" value="RNA Polymerase II Transcription Initiation And Promoter Clearance"/>
</dbReference>
<dbReference type="Reactome" id="R-HSA-76061">
    <property type="pathway name" value="RNA Polymerase III Transcription Initiation From Type 1 Promoter"/>
</dbReference>
<dbReference type="Reactome" id="R-HSA-76066">
    <property type="pathway name" value="RNA Polymerase III Transcription Initiation From Type 2 Promoter"/>
</dbReference>
<dbReference type="Reactome" id="R-HSA-76071">
    <property type="pathway name" value="RNA Polymerase III Transcription Initiation From Type 3 Promoter"/>
</dbReference>
<dbReference type="Reactome" id="R-HSA-77075">
    <property type="pathway name" value="RNA Pol II CTD phosphorylation and interaction with CE"/>
</dbReference>
<dbReference type="Reactome" id="R-HSA-8851708">
    <property type="pathway name" value="Signaling by FGFR2 IIIa TM"/>
</dbReference>
<dbReference type="Reactome" id="R-HSA-9018519">
    <property type="pathway name" value="Estrogen-dependent gene expression"/>
</dbReference>
<dbReference type="Reactome" id="R-HSA-9670095">
    <property type="pathway name" value="Inhibition of DNA recombination at telomere"/>
</dbReference>
<dbReference type="SignaLink" id="P52434"/>
<dbReference type="SIGNOR" id="P52434"/>
<dbReference type="BioGRID-ORCS" id="5437">
    <property type="hits" value="811 hits in 1156 CRISPR screens"/>
</dbReference>
<dbReference type="CD-CODE" id="91857CE7">
    <property type="entry name" value="Nucleolus"/>
</dbReference>
<dbReference type="ChiTaRS" id="POLR2H">
    <property type="organism name" value="human"/>
</dbReference>
<dbReference type="EvolutionaryTrace" id="P52434"/>
<dbReference type="GeneWiki" id="POLR2H"/>
<dbReference type="GenomeRNAi" id="5437"/>
<dbReference type="Pharos" id="P52434">
    <property type="development level" value="Tbio"/>
</dbReference>
<dbReference type="PRO" id="PR:P52434"/>
<dbReference type="Proteomes" id="UP000005640">
    <property type="component" value="Chromosome 3"/>
</dbReference>
<dbReference type="RNAct" id="P52434">
    <property type="molecule type" value="protein"/>
</dbReference>
<dbReference type="Bgee" id="ENSG00000163882">
    <property type="expression patterns" value="Expressed in mucosa of transverse colon and 203 other cell types or tissues"/>
</dbReference>
<dbReference type="ExpressionAtlas" id="P52434">
    <property type="expression patterns" value="baseline and differential"/>
</dbReference>
<dbReference type="GO" id="GO:0005829">
    <property type="term" value="C:cytosol"/>
    <property type="evidence" value="ECO:0000304"/>
    <property type="project" value="Reactome"/>
</dbReference>
<dbReference type="GO" id="GO:0005654">
    <property type="term" value="C:nucleoplasm"/>
    <property type="evidence" value="ECO:0000304"/>
    <property type="project" value="Reactome"/>
</dbReference>
<dbReference type="GO" id="GO:0005634">
    <property type="term" value="C:nucleus"/>
    <property type="evidence" value="ECO:0000314"/>
    <property type="project" value="UniProtKB"/>
</dbReference>
<dbReference type="GO" id="GO:0032993">
    <property type="term" value="C:protein-DNA complex"/>
    <property type="evidence" value="ECO:0000314"/>
    <property type="project" value="CAFA"/>
</dbReference>
<dbReference type="GO" id="GO:0005736">
    <property type="term" value="C:RNA polymerase I complex"/>
    <property type="evidence" value="ECO:0000314"/>
    <property type="project" value="UniProtKB"/>
</dbReference>
<dbReference type="GO" id="GO:0005665">
    <property type="term" value="C:RNA polymerase II, core complex"/>
    <property type="evidence" value="ECO:0000314"/>
    <property type="project" value="UniProtKB"/>
</dbReference>
<dbReference type="GO" id="GO:0005666">
    <property type="term" value="C:RNA polymerase III complex"/>
    <property type="evidence" value="ECO:0000314"/>
    <property type="project" value="UniProtKB"/>
</dbReference>
<dbReference type="GO" id="GO:0003899">
    <property type="term" value="F:DNA-directed RNA polymerase activity"/>
    <property type="evidence" value="ECO:0007669"/>
    <property type="project" value="InterPro"/>
</dbReference>
<dbReference type="GO" id="GO:0003697">
    <property type="term" value="F:single-stranded DNA binding"/>
    <property type="evidence" value="ECO:0000314"/>
    <property type="project" value="CAFA"/>
</dbReference>
<dbReference type="GO" id="GO:0006366">
    <property type="term" value="P:transcription by RNA polymerase II"/>
    <property type="evidence" value="ECO:0000314"/>
    <property type="project" value="UniProtKB"/>
</dbReference>
<dbReference type="FunFam" id="2.40.50.140:FF:000073">
    <property type="entry name" value="DNA-directed RNA polymerases I, II, and III subunit RPABC3"/>
    <property type="match status" value="1"/>
</dbReference>
<dbReference type="Gene3D" id="2.40.50.140">
    <property type="entry name" value="Nucleic acid-binding proteins"/>
    <property type="match status" value="1"/>
</dbReference>
<dbReference type="InterPro" id="IPR012340">
    <property type="entry name" value="NA-bd_OB-fold"/>
</dbReference>
<dbReference type="InterPro" id="IPR005570">
    <property type="entry name" value="RPABC3"/>
</dbReference>
<dbReference type="PANTHER" id="PTHR10917">
    <property type="entry name" value="DNA-DIRECTED RNA POLYMERASES I, II, AND III SUBUNIT RPABC3"/>
    <property type="match status" value="1"/>
</dbReference>
<dbReference type="PANTHER" id="PTHR10917:SF0">
    <property type="entry name" value="DNA-DIRECTED RNA POLYMERASES I, II, AND III SUBUNIT RPABC3"/>
    <property type="match status" value="1"/>
</dbReference>
<dbReference type="Pfam" id="PF03870">
    <property type="entry name" value="RNA_pol_Rpb8"/>
    <property type="match status" value="1"/>
</dbReference>
<dbReference type="PIRSF" id="PIRSF000779">
    <property type="entry name" value="RNA_pol_Rpb8"/>
    <property type="match status" value="1"/>
</dbReference>
<dbReference type="SMART" id="SM00658">
    <property type="entry name" value="RPOL8c"/>
    <property type="match status" value="1"/>
</dbReference>
<dbReference type="SUPFAM" id="SSF50249">
    <property type="entry name" value="Nucleic acid-binding proteins"/>
    <property type="match status" value="1"/>
</dbReference>
<organism>
    <name type="scientific">Homo sapiens</name>
    <name type="common">Human</name>
    <dbReference type="NCBI Taxonomy" id="9606"/>
    <lineage>
        <taxon>Eukaryota</taxon>
        <taxon>Metazoa</taxon>
        <taxon>Chordata</taxon>
        <taxon>Craniata</taxon>
        <taxon>Vertebrata</taxon>
        <taxon>Euteleostomi</taxon>
        <taxon>Mammalia</taxon>
        <taxon>Eutheria</taxon>
        <taxon>Euarchontoglires</taxon>
        <taxon>Primates</taxon>
        <taxon>Haplorrhini</taxon>
        <taxon>Catarrhini</taxon>
        <taxon>Hominidae</taxon>
        <taxon>Homo</taxon>
    </lineage>
</organism>
<evidence type="ECO:0000269" key="1">
    <source>
    </source>
</evidence>
<evidence type="ECO:0000269" key="2">
    <source>
    </source>
</evidence>
<evidence type="ECO:0000269" key="3">
    <source>
    </source>
</evidence>
<evidence type="ECO:0000269" key="4">
    <source>
    </source>
</evidence>
<evidence type="ECO:0000269" key="5">
    <source>
    </source>
</evidence>
<evidence type="ECO:0000269" key="6">
    <source>
    </source>
</evidence>
<evidence type="ECO:0000269" key="7">
    <source>
    </source>
</evidence>
<evidence type="ECO:0000269" key="8">
    <source>
    </source>
</evidence>
<evidence type="ECO:0000269" key="9">
    <source>
    </source>
</evidence>
<evidence type="ECO:0000269" key="10">
    <source>
    </source>
</evidence>
<evidence type="ECO:0000269" key="11">
    <source>
    </source>
</evidence>
<evidence type="ECO:0000269" key="12">
    <source>
    </source>
</evidence>
<evidence type="ECO:0000269" key="13">
    <source>
    </source>
</evidence>
<evidence type="ECO:0000269" key="14">
    <source>
    </source>
</evidence>
<evidence type="ECO:0000269" key="15">
    <source ref="6"/>
</evidence>
<evidence type="ECO:0000305" key="16"/>
<evidence type="ECO:0000305" key="17">
    <source>
    </source>
</evidence>
<evidence type="ECO:0000305" key="18">
    <source>
    </source>
</evidence>
<evidence type="ECO:0000312" key="19">
    <source>
        <dbReference type="HGNC" id="HGNC:9195"/>
    </source>
</evidence>
<evidence type="ECO:0007744" key="20">
    <source>
    </source>
</evidence>
<evidence type="ECO:0007744" key="21">
    <source>
    </source>
</evidence>
<evidence type="ECO:0007744" key="22">
    <source>
    </source>
</evidence>
<evidence type="ECO:0007829" key="23">
    <source>
        <dbReference type="PDB" id="2F3I"/>
    </source>
</evidence>
<evidence type="ECO:0007829" key="24">
    <source>
        <dbReference type="PDB" id="7AE1"/>
    </source>
</evidence>
<evidence type="ECO:0007829" key="25">
    <source>
        <dbReference type="PDB" id="7D59"/>
    </source>
</evidence>
<evidence type="ECO:0007829" key="26">
    <source>
        <dbReference type="PDB" id="7OB9"/>
    </source>
</evidence>